<proteinExistence type="evidence at transcript level"/>
<gene>
    <name type="primary">ak8</name>
    <name type="ORF">zgc:112030</name>
</gene>
<feature type="chain" id="PRO_0000279387" description="Adenylate kinase 8">
    <location>
        <begin position="1"/>
        <end position="486"/>
    </location>
</feature>
<feature type="region of interest" description="Adenylate kinase 1" evidence="2">
    <location>
        <begin position="58"/>
        <end position="258"/>
    </location>
</feature>
<feature type="region of interest" description="NMP 1" evidence="1">
    <location>
        <begin position="87"/>
        <end position="112"/>
    </location>
</feature>
<feature type="region of interest" description="LID 1" evidence="1">
    <location>
        <begin position="176"/>
        <end position="205"/>
    </location>
</feature>
<feature type="region of interest" description="Adenylate kinase 2" evidence="2">
    <location>
        <begin position="269"/>
        <end position="471"/>
    </location>
</feature>
<feature type="region of interest" description="NMP 2" evidence="1">
    <location>
        <begin position="298"/>
        <end position="327"/>
    </location>
</feature>
<feature type="region of interest" description="LID 2" evidence="1">
    <location>
        <begin position="391"/>
        <end position="424"/>
    </location>
</feature>
<feature type="binding site" evidence="1">
    <location>
        <begin position="67"/>
        <end position="72"/>
    </location>
    <ligand>
        <name>ATP</name>
        <dbReference type="ChEBI" id="CHEBI:30616"/>
        <label>1</label>
    </ligand>
</feature>
<feature type="binding site" evidence="1">
    <location>
        <begin position="139"/>
        <end position="142"/>
    </location>
    <ligand>
        <name>AMP</name>
        <dbReference type="ChEBI" id="CHEBI:456215"/>
        <label>1</label>
    </ligand>
</feature>
<feature type="binding site" evidence="1">
    <location>
        <position position="202"/>
    </location>
    <ligand>
        <name>AMP</name>
        <dbReference type="ChEBI" id="CHEBI:456215"/>
        <label>1</label>
    </ligand>
</feature>
<feature type="binding site" evidence="1">
    <location>
        <begin position="278"/>
        <end position="283"/>
    </location>
    <ligand>
        <name>ATP</name>
        <dbReference type="ChEBI" id="CHEBI:30616"/>
        <label>2</label>
    </ligand>
</feature>
<feature type="binding site" evidence="1">
    <location>
        <begin position="325"/>
        <end position="327"/>
    </location>
    <ligand>
        <name>AMP</name>
        <dbReference type="ChEBI" id="CHEBI:456215"/>
        <label>2</label>
    </ligand>
</feature>
<feature type="binding site" evidence="1">
    <location>
        <begin position="354"/>
        <end position="357"/>
    </location>
    <ligand>
        <name>AMP</name>
        <dbReference type="ChEBI" id="CHEBI:456215"/>
        <label>2</label>
    </ligand>
</feature>
<feature type="binding site" evidence="1">
    <location>
        <position position="392"/>
    </location>
    <ligand>
        <name>ATP</name>
        <dbReference type="ChEBI" id="CHEBI:30616"/>
        <label>2</label>
    </ligand>
</feature>
<feature type="binding site" evidence="1">
    <location>
        <position position="432"/>
    </location>
    <ligand>
        <name>AMP</name>
        <dbReference type="ChEBI" id="CHEBI:456215"/>
        <label>2</label>
    </ligand>
</feature>
<protein>
    <recommendedName>
        <fullName>Adenylate kinase 8</fullName>
        <shortName>AK 8</shortName>
        <ecNumber>2.7.4.3</ecNumber>
        <ecNumber>2.7.4.6</ecNumber>
    </recommendedName>
    <alternativeName>
        <fullName>ATP-AMP transphosphorylase 8</fullName>
    </alternativeName>
</protein>
<name>KAD8_DANRE</name>
<organism>
    <name type="scientific">Danio rerio</name>
    <name type="common">Zebrafish</name>
    <name type="synonym">Brachydanio rerio</name>
    <dbReference type="NCBI Taxonomy" id="7955"/>
    <lineage>
        <taxon>Eukaryota</taxon>
        <taxon>Metazoa</taxon>
        <taxon>Chordata</taxon>
        <taxon>Craniata</taxon>
        <taxon>Vertebrata</taxon>
        <taxon>Euteleostomi</taxon>
        <taxon>Actinopterygii</taxon>
        <taxon>Neopterygii</taxon>
        <taxon>Teleostei</taxon>
        <taxon>Ostariophysi</taxon>
        <taxon>Cypriniformes</taxon>
        <taxon>Danionidae</taxon>
        <taxon>Danioninae</taxon>
        <taxon>Danio</taxon>
    </lineage>
</organism>
<evidence type="ECO:0000250" key="1">
    <source>
        <dbReference type="UniProtKB" id="P69441"/>
    </source>
</evidence>
<evidence type="ECO:0000250" key="2">
    <source>
        <dbReference type="UniProtKB" id="Q96MA6"/>
    </source>
</evidence>
<evidence type="ECO:0000305" key="3"/>
<accession>Q502L7</accession>
<comment type="function">
    <text evidence="2">Nucleoside monophosphate (NMP) kinase that catalyzes the reversible transfer of the terminal phosphate group between nucleoside triphosphates and monophosphates. Has highest activity toward AMP, and weaker activity toward dAMP, CMP and dCMP. Also displays broad nucleoside diphosphate kinase activity.</text>
</comment>
<comment type="catalytic activity">
    <reaction evidence="2">
        <text>AMP + ATP = 2 ADP</text>
        <dbReference type="Rhea" id="RHEA:12973"/>
        <dbReference type="ChEBI" id="CHEBI:30616"/>
        <dbReference type="ChEBI" id="CHEBI:456215"/>
        <dbReference type="ChEBI" id="CHEBI:456216"/>
        <dbReference type="EC" id="2.7.4.3"/>
    </reaction>
</comment>
<comment type="catalytic activity">
    <reaction evidence="2">
        <text>a 2'-deoxyribonucleoside 5'-diphosphate + ATP = a 2'-deoxyribonucleoside 5'-triphosphate + ADP</text>
        <dbReference type="Rhea" id="RHEA:44640"/>
        <dbReference type="ChEBI" id="CHEBI:30616"/>
        <dbReference type="ChEBI" id="CHEBI:61560"/>
        <dbReference type="ChEBI" id="CHEBI:73316"/>
        <dbReference type="ChEBI" id="CHEBI:456216"/>
        <dbReference type="EC" id="2.7.4.6"/>
    </reaction>
</comment>
<comment type="catalytic activity">
    <reaction evidence="2">
        <text>a ribonucleoside 5'-diphosphate + ATP = a ribonucleoside 5'-triphosphate + ADP</text>
        <dbReference type="Rhea" id="RHEA:18113"/>
        <dbReference type="ChEBI" id="CHEBI:30616"/>
        <dbReference type="ChEBI" id="CHEBI:57930"/>
        <dbReference type="ChEBI" id="CHEBI:61557"/>
        <dbReference type="ChEBI" id="CHEBI:456216"/>
        <dbReference type="EC" id="2.7.4.6"/>
    </reaction>
</comment>
<comment type="subcellular location">
    <subcellularLocation>
        <location evidence="2">Cytoplasm</location>
        <location evidence="2">Cytosol</location>
    </subcellularLocation>
</comment>
<comment type="similarity">
    <text evidence="3">Belongs to the adenylate kinase family.</text>
</comment>
<sequence>MDSAERPLRIPPEMVIYAEKHDIFHLIQTLVRNLMVDKPDDPIQYLINFLERDNVDVPRIILLGPPASGKKTVAKKLCEHTQAIHITFCDILKDDSDLTRAAQSYYDKKQNVPKDLWIQLIQQRLSKPDCVQRGWVLEAIPKTQDEALCLQEAGITPDHVVMLEAPDVVLIERSSGKRIDPVTGDVYHVTFMWPESEEVAQRLETPRTLMPVQVMSQKLQKYHTEAHALKRTYHNCLKIINADQPHVDVFSQVLNFICTPRHSPSPYTPRILLFGPPGAGRNLQAKLIAQKYGIINICCGELLKAVSADESHMGELIKPYLESEQQVPSSIVLRVLTERLSRMDCTARGWVLHGFPRDVEEAELLHKSNFTPNRVFFLEITDDIAIERLALRAVDPVTGEWYHSVYKPPPGPEVQARLRFNPQHSEAQLLMRLKEYWSQTVRLQAFYPQAVYINADQDPHTVFESLESRLVGQLPKVLSNQQTNEN</sequence>
<keyword id="KW-0067">ATP-binding</keyword>
<keyword id="KW-0963">Cytoplasm</keyword>
<keyword id="KW-0418">Kinase</keyword>
<keyword id="KW-0547">Nucleotide-binding</keyword>
<keyword id="KW-1185">Reference proteome</keyword>
<keyword id="KW-0808">Transferase</keyword>
<reference key="1">
    <citation type="submission" date="2005-05" db="EMBL/GenBank/DDBJ databases">
        <authorList>
            <consortium name="NIH - Zebrafish Gene Collection (ZGC) project"/>
        </authorList>
    </citation>
    <scope>NUCLEOTIDE SEQUENCE [LARGE SCALE MRNA]</scope>
    <source>
        <tissue>Olfactory epithelium</tissue>
    </source>
</reference>
<dbReference type="EC" id="2.7.4.3"/>
<dbReference type="EC" id="2.7.4.6"/>
<dbReference type="EMBL" id="BC095649">
    <property type="protein sequence ID" value="AAH95649.1"/>
    <property type="molecule type" value="mRNA"/>
</dbReference>
<dbReference type="RefSeq" id="NP_001018480.1">
    <property type="nucleotide sequence ID" value="NM_001020644.1"/>
</dbReference>
<dbReference type="SMR" id="Q502L7"/>
<dbReference type="FunCoup" id="Q502L7">
    <property type="interactions" value="587"/>
</dbReference>
<dbReference type="STRING" id="7955.ENSDARP00000043095"/>
<dbReference type="PaxDb" id="7955-ENSDARP00000043095"/>
<dbReference type="GeneID" id="553671"/>
<dbReference type="KEGG" id="dre:553671"/>
<dbReference type="AGR" id="ZFIN:ZDB-GENE-050522-275"/>
<dbReference type="CTD" id="158067"/>
<dbReference type="ZFIN" id="ZDB-GENE-050522-275">
    <property type="gene designation" value="ak8"/>
</dbReference>
<dbReference type="eggNOG" id="KOG3078">
    <property type="taxonomic scope" value="Eukaryota"/>
</dbReference>
<dbReference type="InParanoid" id="Q502L7"/>
<dbReference type="OrthoDB" id="522106at2759"/>
<dbReference type="PhylomeDB" id="Q502L7"/>
<dbReference type="Reactome" id="R-DRE-499943">
    <property type="pathway name" value="Interconversion of nucleotide di- and triphosphates"/>
</dbReference>
<dbReference type="PRO" id="PR:Q502L7"/>
<dbReference type="Proteomes" id="UP000000437">
    <property type="component" value="Alternate scaffold 5"/>
</dbReference>
<dbReference type="Proteomes" id="UP000000437">
    <property type="component" value="Chromosome 5"/>
</dbReference>
<dbReference type="GO" id="GO:0005737">
    <property type="term" value="C:cytoplasm"/>
    <property type="evidence" value="ECO:0000318"/>
    <property type="project" value="GO_Central"/>
</dbReference>
<dbReference type="GO" id="GO:0005829">
    <property type="term" value="C:cytosol"/>
    <property type="evidence" value="ECO:0007669"/>
    <property type="project" value="UniProtKB-SubCell"/>
</dbReference>
<dbReference type="GO" id="GO:0004127">
    <property type="term" value="F:(d)CMP kinase activity"/>
    <property type="evidence" value="ECO:0000250"/>
    <property type="project" value="UniProtKB"/>
</dbReference>
<dbReference type="GO" id="GO:0004017">
    <property type="term" value="F:adenylate kinase activity"/>
    <property type="evidence" value="ECO:0000250"/>
    <property type="project" value="UniProtKB"/>
</dbReference>
<dbReference type="GO" id="GO:0005524">
    <property type="term" value="F:ATP binding"/>
    <property type="evidence" value="ECO:0007669"/>
    <property type="project" value="UniProtKB-KW"/>
</dbReference>
<dbReference type="GO" id="GO:0004550">
    <property type="term" value="F:nucleoside diphosphate kinase activity"/>
    <property type="evidence" value="ECO:0000250"/>
    <property type="project" value="UniProtKB"/>
</dbReference>
<dbReference type="CDD" id="cd01428">
    <property type="entry name" value="ADK"/>
    <property type="match status" value="2"/>
</dbReference>
<dbReference type="CDD" id="cd22979">
    <property type="entry name" value="DD_AK8"/>
    <property type="match status" value="1"/>
</dbReference>
<dbReference type="FunFam" id="3.40.50.300:FF:001617">
    <property type="entry name" value="Adenylate kinase 8"/>
    <property type="match status" value="1"/>
</dbReference>
<dbReference type="Gene3D" id="1.20.890.10">
    <property type="entry name" value="cAMP-dependent protein kinase regulatory subunit, dimerization-anchoring domain"/>
    <property type="match status" value="1"/>
</dbReference>
<dbReference type="Gene3D" id="3.40.50.300">
    <property type="entry name" value="P-loop containing nucleotide triphosphate hydrolases"/>
    <property type="match status" value="2"/>
</dbReference>
<dbReference type="HAMAP" id="MF_00235">
    <property type="entry name" value="Adenylate_kinase_Adk"/>
    <property type="match status" value="1"/>
</dbReference>
<dbReference type="InterPro" id="IPR000850">
    <property type="entry name" value="Adenylat/UMP-CMP_kin"/>
</dbReference>
<dbReference type="InterPro" id="IPR036193">
    <property type="entry name" value="ADK_active_lid_dom_sf"/>
</dbReference>
<dbReference type="InterPro" id="IPR027417">
    <property type="entry name" value="P-loop_NTPase"/>
</dbReference>
<dbReference type="PANTHER" id="PTHR23359">
    <property type="entry name" value="NUCLEOTIDE KINASE"/>
    <property type="match status" value="1"/>
</dbReference>
<dbReference type="Pfam" id="PF00406">
    <property type="entry name" value="ADK"/>
    <property type="match status" value="2"/>
</dbReference>
<dbReference type="PRINTS" id="PR00094">
    <property type="entry name" value="ADENYLTKNASE"/>
</dbReference>
<dbReference type="SUPFAM" id="SSF47391">
    <property type="entry name" value="Dimerization-anchoring domain of cAMP-dependent PK regulatory subunit"/>
    <property type="match status" value="1"/>
</dbReference>
<dbReference type="SUPFAM" id="SSF57774">
    <property type="entry name" value="Microbial and mitochondrial ADK, insert 'zinc finger' domain"/>
    <property type="match status" value="2"/>
</dbReference>
<dbReference type="SUPFAM" id="SSF52540">
    <property type="entry name" value="P-loop containing nucleoside triphosphate hydrolases"/>
    <property type="match status" value="2"/>
</dbReference>